<keyword id="KW-0378">Hydrolase</keyword>
<keyword id="KW-0464">Manganese</keyword>
<keyword id="KW-1185">Reference proteome</keyword>
<comment type="catalytic activity">
    <reaction evidence="1">
        <text>adenine + H2O + H(+) = hypoxanthine + NH4(+)</text>
        <dbReference type="Rhea" id="RHEA:23688"/>
        <dbReference type="ChEBI" id="CHEBI:15377"/>
        <dbReference type="ChEBI" id="CHEBI:15378"/>
        <dbReference type="ChEBI" id="CHEBI:16708"/>
        <dbReference type="ChEBI" id="CHEBI:17368"/>
        <dbReference type="ChEBI" id="CHEBI:28938"/>
        <dbReference type="EC" id="3.5.4.2"/>
    </reaction>
</comment>
<comment type="cofactor">
    <cofactor evidence="1">
        <name>Mn(2+)</name>
        <dbReference type="ChEBI" id="CHEBI:29035"/>
    </cofactor>
</comment>
<comment type="similarity">
    <text evidence="1">Belongs to the metallo-dependent hydrolases superfamily. Adenine deaminase family.</text>
</comment>
<proteinExistence type="inferred from homology"/>
<reference key="1">
    <citation type="submission" date="2006-06" db="EMBL/GenBank/DDBJ databases">
        <title>Complete sequence of Rubrobacter xylanophilus DSM 9941.</title>
        <authorList>
            <consortium name="US DOE Joint Genome Institute"/>
            <person name="Copeland A."/>
            <person name="Lucas S."/>
            <person name="Lapidus A."/>
            <person name="Barry K."/>
            <person name="Detter J.C."/>
            <person name="Glavina del Rio T."/>
            <person name="Hammon N."/>
            <person name="Israni S."/>
            <person name="Dalin E."/>
            <person name="Tice H."/>
            <person name="Pitluck S."/>
            <person name="Munk A.C."/>
            <person name="Brettin T."/>
            <person name="Bruce D."/>
            <person name="Han C."/>
            <person name="Tapia R."/>
            <person name="Gilna P."/>
            <person name="Schmutz J."/>
            <person name="Larimer F."/>
            <person name="Land M."/>
            <person name="Hauser L."/>
            <person name="Kyrpides N."/>
            <person name="Lykidis A."/>
            <person name="da Costa M.S."/>
            <person name="Rainey F.A."/>
            <person name="Empadinhas N."/>
            <person name="Jolivet E."/>
            <person name="Battista J.R."/>
            <person name="Richardson P."/>
        </authorList>
    </citation>
    <scope>NUCLEOTIDE SEQUENCE [LARGE SCALE GENOMIC DNA]</scope>
    <source>
        <strain>DSM 9941 / JCM 11954 / NBRC 16129 / PRD-1</strain>
    </source>
</reference>
<sequence length="606" mass="64643">MEERGRRKPLYEMTRELAATARGDLPATLVIRDGTLVSVTSGEVLPGMSVAVRGPRIAYVGPDAGHTVGPQTTVIDAAGRYIAPGFLDGHCHIESSQITVTQFARAVLPLGTTGGFFDAHEITNVLGLRGLRLMLDEARSTPLAAYLEVASCVPSTSTELETPGAVIGPEEVAEALSWGEDVIALGEVMNFPGVVFGDERMHAEISAALRAGKIADGHFCWPPDDHRLAAYAASGISGCHEGTTPEDTLWRLRQGMYAKLRRGSAWHDVAATIKAHTERGLDPRRILLVTDDRSPESLLEEGHMDFVVRHAIAQGVNPVTAFQMATLNPAERFRVSHDVGSVTPGRYADILLLEGDLAEVRVSLTVAAGEVVAEGGRMVAELEPYDYPAFCLDTVRVAGGLGPEDFDIPAPGGGERARVRAIRVVENHVETRGEWVELPVEGGLVRLDPRKDVCKLFVIERHGRGGGRGAGFVTGLGFERPAALASTVAHDSHNLMVLGNSEELMSRAAREVVAARGGVAVAVGGETAVLPLPVAGLMSPEPYEEVARLSREIGRALRSAGCRMNYAFMTISLLALVVLPELHLSDRGLVEVGEEGFRLVGLAAEG</sequence>
<protein>
    <recommendedName>
        <fullName evidence="1">Adenine deaminase</fullName>
        <shortName evidence="1">Adenase</shortName>
        <shortName evidence="1">Adenine aminase</shortName>
        <ecNumber evidence="1">3.5.4.2</ecNumber>
    </recommendedName>
</protein>
<gene>
    <name evidence="1" type="primary">ade</name>
    <name type="ordered locus">Rxyl_0377</name>
</gene>
<organism>
    <name type="scientific">Rubrobacter xylanophilus (strain DSM 9941 / JCM 11954 / NBRC 16129 / PRD-1)</name>
    <dbReference type="NCBI Taxonomy" id="266117"/>
    <lineage>
        <taxon>Bacteria</taxon>
        <taxon>Bacillati</taxon>
        <taxon>Actinomycetota</taxon>
        <taxon>Rubrobacteria</taxon>
        <taxon>Rubrobacterales</taxon>
        <taxon>Rubrobacteraceae</taxon>
        <taxon>Rubrobacter</taxon>
    </lineage>
</organism>
<accession>Q1AZ25</accession>
<feature type="chain" id="PRO_0000292398" description="Adenine deaminase">
    <location>
        <begin position="1"/>
        <end position="606"/>
    </location>
</feature>
<dbReference type="EC" id="3.5.4.2" evidence="1"/>
<dbReference type="EMBL" id="CP000386">
    <property type="protein sequence ID" value="ABG03353.1"/>
    <property type="molecule type" value="Genomic_DNA"/>
</dbReference>
<dbReference type="RefSeq" id="WP_011563371.1">
    <property type="nucleotide sequence ID" value="NC_008148.1"/>
</dbReference>
<dbReference type="SMR" id="Q1AZ25"/>
<dbReference type="STRING" id="266117.Rxyl_0377"/>
<dbReference type="KEGG" id="rxy:Rxyl_0377"/>
<dbReference type="eggNOG" id="COG1001">
    <property type="taxonomic scope" value="Bacteria"/>
</dbReference>
<dbReference type="HOGENOM" id="CLU_027935_0_0_11"/>
<dbReference type="OrthoDB" id="9766983at2"/>
<dbReference type="PhylomeDB" id="Q1AZ25"/>
<dbReference type="Proteomes" id="UP000006637">
    <property type="component" value="Chromosome"/>
</dbReference>
<dbReference type="GO" id="GO:0000034">
    <property type="term" value="F:adenine deaminase activity"/>
    <property type="evidence" value="ECO:0007669"/>
    <property type="project" value="UniProtKB-UniRule"/>
</dbReference>
<dbReference type="GO" id="GO:0006146">
    <property type="term" value="P:adenine catabolic process"/>
    <property type="evidence" value="ECO:0007669"/>
    <property type="project" value="InterPro"/>
</dbReference>
<dbReference type="Gene3D" id="3.20.20.140">
    <property type="entry name" value="Metal-dependent hydrolases"/>
    <property type="match status" value="1"/>
</dbReference>
<dbReference type="Gene3D" id="2.30.40.10">
    <property type="entry name" value="Urease, subunit C, domain 1"/>
    <property type="match status" value="1"/>
</dbReference>
<dbReference type="HAMAP" id="MF_01518">
    <property type="entry name" value="Adenine_deamin"/>
    <property type="match status" value="1"/>
</dbReference>
<dbReference type="InterPro" id="IPR006679">
    <property type="entry name" value="Adenine_deam"/>
</dbReference>
<dbReference type="InterPro" id="IPR026912">
    <property type="entry name" value="Adenine_deam_C"/>
</dbReference>
<dbReference type="InterPro" id="IPR006680">
    <property type="entry name" value="Amidohydro-rel"/>
</dbReference>
<dbReference type="InterPro" id="IPR011059">
    <property type="entry name" value="Metal-dep_hydrolase_composite"/>
</dbReference>
<dbReference type="InterPro" id="IPR032466">
    <property type="entry name" value="Metal_Hydrolase"/>
</dbReference>
<dbReference type="PANTHER" id="PTHR11113:SF2">
    <property type="entry name" value="ADENINE DEAMINASE"/>
    <property type="match status" value="1"/>
</dbReference>
<dbReference type="PANTHER" id="PTHR11113">
    <property type="entry name" value="N-ACETYLGLUCOSAMINE-6-PHOSPHATE DEACETYLASE"/>
    <property type="match status" value="1"/>
</dbReference>
<dbReference type="Pfam" id="PF13382">
    <property type="entry name" value="Adenine_deam_C"/>
    <property type="match status" value="1"/>
</dbReference>
<dbReference type="Pfam" id="PF01979">
    <property type="entry name" value="Amidohydro_1"/>
    <property type="match status" value="1"/>
</dbReference>
<dbReference type="SUPFAM" id="SSF51338">
    <property type="entry name" value="Composite domain of metallo-dependent hydrolases"/>
    <property type="match status" value="1"/>
</dbReference>
<dbReference type="SUPFAM" id="SSF51556">
    <property type="entry name" value="Metallo-dependent hydrolases"/>
    <property type="match status" value="1"/>
</dbReference>
<name>ADEC_RUBXD</name>
<evidence type="ECO:0000255" key="1">
    <source>
        <dbReference type="HAMAP-Rule" id="MF_01518"/>
    </source>
</evidence>